<sequence length="391" mass="41874">MAVKVLVVDDSSFFRRRVSEILELDSEIEVIGFAVNGRDAVEKAASLRPDMITMDVEMPVLDGISAVKEIMASNPTPILMFSSLTRSGATATLDALDAGAMDFLPKKFEDIARNNEDAIKLLQSKVKEIGRQRIRRVASPRPSSINKPLFTPTSAPSALAARFAQTNKTATTVVQPERSFNNSPVTSRSAIVTKRASGKHYQLVAIGTSTGGPVALQTILTQLPANFPHPILLIQHMPAAFTPAFAARLNSLCKIQVKEAQQGDRLQAGVAYLAPGGQQMMIDGRGASRTLRVFEDNSERISYKPSVDVTFASAAKAYQGDVLAIVLTGMGADGREGARMLKQSGATIWAQDEKSCVVYGMPQAIANAGLASESLPLDEVAIRLKTEVGCG</sequence>
<evidence type="ECO:0000255" key="1">
    <source>
        <dbReference type="HAMAP-Rule" id="MF_00099"/>
    </source>
</evidence>
<keyword id="KW-0145">Chemotaxis</keyword>
<keyword id="KW-0963">Cytoplasm</keyword>
<keyword id="KW-0378">Hydrolase</keyword>
<keyword id="KW-0597">Phosphoprotein</keyword>
<keyword id="KW-1185">Reference proteome</keyword>
<protein>
    <recommendedName>
        <fullName evidence="1">Protein-glutamate methylesterase/protein-glutamine glutaminase</fullName>
        <ecNumber evidence="1">3.1.1.61</ecNumber>
        <ecNumber evidence="1">3.5.1.44</ecNumber>
    </recommendedName>
</protein>
<reference key="1">
    <citation type="journal article" date="2005" name="Genome Res.">
        <title>Coping with cold: the genome of the versatile marine Antarctica bacterium Pseudoalteromonas haloplanktis TAC125.</title>
        <authorList>
            <person name="Medigue C."/>
            <person name="Krin E."/>
            <person name="Pascal G."/>
            <person name="Barbe V."/>
            <person name="Bernsel A."/>
            <person name="Bertin P.N."/>
            <person name="Cheung F."/>
            <person name="Cruveiller S."/>
            <person name="D'Amico S."/>
            <person name="Duilio A."/>
            <person name="Fang G."/>
            <person name="Feller G."/>
            <person name="Ho C."/>
            <person name="Mangenot S."/>
            <person name="Marino G."/>
            <person name="Nilsson J."/>
            <person name="Parrilli E."/>
            <person name="Rocha E.P.C."/>
            <person name="Rouy Z."/>
            <person name="Sekowska A."/>
            <person name="Tutino M.L."/>
            <person name="Vallenet D."/>
            <person name="von Heijne G."/>
            <person name="Danchin A."/>
        </authorList>
    </citation>
    <scope>NUCLEOTIDE SEQUENCE [LARGE SCALE GENOMIC DNA]</scope>
    <source>
        <strain>TAC 125</strain>
    </source>
</reference>
<comment type="function">
    <text evidence="1">Involved in chemotaxis. Part of a chemotaxis signal transduction system that modulates chemotaxis in response to various stimuli. Catalyzes the demethylation of specific methylglutamate residues introduced into the chemoreceptors (methyl-accepting chemotaxis proteins or MCP) by CheR. Also mediates the irreversible deamidation of specific glutamine residues to glutamic acid.</text>
</comment>
<comment type="catalytic activity">
    <reaction evidence="1">
        <text>[protein]-L-glutamate 5-O-methyl ester + H2O = L-glutamyl-[protein] + methanol + H(+)</text>
        <dbReference type="Rhea" id="RHEA:23236"/>
        <dbReference type="Rhea" id="RHEA-COMP:10208"/>
        <dbReference type="Rhea" id="RHEA-COMP:10311"/>
        <dbReference type="ChEBI" id="CHEBI:15377"/>
        <dbReference type="ChEBI" id="CHEBI:15378"/>
        <dbReference type="ChEBI" id="CHEBI:17790"/>
        <dbReference type="ChEBI" id="CHEBI:29973"/>
        <dbReference type="ChEBI" id="CHEBI:82795"/>
        <dbReference type="EC" id="3.1.1.61"/>
    </reaction>
</comment>
<comment type="catalytic activity">
    <reaction evidence="1">
        <text>L-glutaminyl-[protein] + H2O = L-glutamyl-[protein] + NH4(+)</text>
        <dbReference type="Rhea" id="RHEA:16441"/>
        <dbReference type="Rhea" id="RHEA-COMP:10207"/>
        <dbReference type="Rhea" id="RHEA-COMP:10208"/>
        <dbReference type="ChEBI" id="CHEBI:15377"/>
        <dbReference type="ChEBI" id="CHEBI:28938"/>
        <dbReference type="ChEBI" id="CHEBI:29973"/>
        <dbReference type="ChEBI" id="CHEBI:30011"/>
        <dbReference type="EC" id="3.5.1.44"/>
    </reaction>
</comment>
<comment type="subcellular location">
    <subcellularLocation>
        <location evidence="1">Cytoplasm</location>
    </subcellularLocation>
</comment>
<comment type="domain">
    <text evidence="1">Contains a C-terminal catalytic domain, and an N-terminal region which modulates catalytic activity.</text>
</comment>
<comment type="PTM">
    <text evidence="1">Phosphorylated by CheA. Phosphorylation of the N-terminal regulatory domain activates the methylesterase activity.</text>
</comment>
<comment type="similarity">
    <text evidence="1">Belongs to the CheB family.</text>
</comment>
<feature type="chain" id="PRO_0000225468" description="Protein-glutamate methylesterase/protein-glutamine glutaminase">
    <location>
        <begin position="1"/>
        <end position="391"/>
    </location>
</feature>
<feature type="domain" description="Response regulatory" evidence="1">
    <location>
        <begin position="4"/>
        <end position="121"/>
    </location>
</feature>
<feature type="domain" description="CheB-type methylesterase" evidence="1">
    <location>
        <begin position="197"/>
        <end position="391"/>
    </location>
</feature>
<feature type="active site" evidence="1">
    <location>
        <position position="209"/>
    </location>
</feature>
<feature type="active site" evidence="1">
    <location>
        <position position="236"/>
    </location>
</feature>
<feature type="active site" evidence="1">
    <location>
        <position position="333"/>
    </location>
</feature>
<feature type="modified residue" description="4-aspartylphosphate" evidence="1">
    <location>
        <position position="55"/>
    </location>
</feature>
<name>CHEB_PSET1</name>
<dbReference type="EC" id="3.1.1.61" evidence="1"/>
<dbReference type="EC" id="3.5.1.44" evidence="1"/>
<dbReference type="EMBL" id="CR954246">
    <property type="protein sequence ID" value="CAI85894.1"/>
    <property type="molecule type" value="Genomic_DNA"/>
</dbReference>
<dbReference type="SMR" id="Q3IDZ3"/>
<dbReference type="STRING" id="326442.PSHAa0813"/>
<dbReference type="KEGG" id="pha:PSHAa0813"/>
<dbReference type="PATRIC" id="fig|326442.8.peg.775"/>
<dbReference type="eggNOG" id="COG2201">
    <property type="taxonomic scope" value="Bacteria"/>
</dbReference>
<dbReference type="HOGENOM" id="CLU_000445_51_0_6"/>
<dbReference type="BioCyc" id="PHAL326442:PSHA_RS03965-MONOMER"/>
<dbReference type="Proteomes" id="UP000006843">
    <property type="component" value="Chromosome I"/>
</dbReference>
<dbReference type="GO" id="GO:0005737">
    <property type="term" value="C:cytoplasm"/>
    <property type="evidence" value="ECO:0007669"/>
    <property type="project" value="UniProtKB-SubCell"/>
</dbReference>
<dbReference type="GO" id="GO:0000156">
    <property type="term" value="F:phosphorelay response regulator activity"/>
    <property type="evidence" value="ECO:0007669"/>
    <property type="project" value="InterPro"/>
</dbReference>
<dbReference type="GO" id="GO:0008984">
    <property type="term" value="F:protein-glutamate methylesterase activity"/>
    <property type="evidence" value="ECO:0007669"/>
    <property type="project" value="UniProtKB-UniRule"/>
</dbReference>
<dbReference type="GO" id="GO:0050568">
    <property type="term" value="F:protein-glutamine glutaminase activity"/>
    <property type="evidence" value="ECO:0007669"/>
    <property type="project" value="UniProtKB-UniRule"/>
</dbReference>
<dbReference type="GO" id="GO:0006935">
    <property type="term" value="P:chemotaxis"/>
    <property type="evidence" value="ECO:0007669"/>
    <property type="project" value="UniProtKB-UniRule"/>
</dbReference>
<dbReference type="CDD" id="cd16432">
    <property type="entry name" value="CheB_Rec"/>
    <property type="match status" value="1"/>
</dbReference>
<dbReference type="CDD" id="cd17541">
    <property type="entry name" value="REC_CheB-like"/>
    <property type="match status" value="1"/>
</dbReference>
<dbReference type="FunFam" id="3.40.50.2300:FF:000077">
    <property type="entry name" value="Chemotaxis response regulator"/>
    <property type="match status" value="1"/>
</dbReference>
<dbReference type="FunFam" id="3.40.50.180:FF:000001">
    <property type="entry name" value="Protein-glutamate methylesterase/protein-glutamine glutaminase"/>
    <property type="match status" value="1"/>
</dbReference>
<dbReference type="Gene3D" id="3.40.50.2300">
    <property type="match status" value="1"/>
</dbReference>
<dbReference type="Gene3D" id="3.40.50.180">
    <property type="entry name" value="Methylesterase CheB, C-terminal domain"/>
    <property type="match status" value="1"/>
</dbReference>
<dbReference type="HAMAP" id="MF_00099">
    <property type="entry name" value="CheB_chemtxs"/>
    <property type="match status" value="1"/>
</dbReference>
<dbReference type="InterPro" id="IPR008248">
    <property type="entry name" value="CheB-like"/>
</dbReference>
<dbReference type="InterPro" id="IPR035909">
    <property type="entry name" value="CheB_C"/>
</dbReference>
<dbReference type="InterPro" id="IPR011006">
    <property type="entry name" value="CheY-like_superfamily"/>
</dbReference>
<dbReference type="InterPro" id="IPR000673">
    <property type="entry name" value="Sig_transdc_resp-reg_Me-estase"/>
</dbReference>
<dbReference type="InterPro" id="IPR001789">
    <property type="entry name" value="Sig_transdc_resp-reg_receiver"/>
</dbReference>
<dbReference type="NCBIfam" id="NF001965">
    <property type="entry name" value="PRK00742.1"/>
    <property type="match status" value="1"/>
</dbReference>
<dbReference type="PANTHER" id="PTHR42872">
    <property type="entry name" value="PROTEIN-GLUTAMATE METHYLESTERASE/PROTEIN-GLUTAMINE GLUTAMINASE"/>
    <property type="match status" value="1"/>
</dbReference>
<dbReference type="PANTHER" id="PTHR42872:SF3">
    <property type="entry name" value="PROTEIN-GLUTAMATE METHYLESTERASE_PROTEIN-GLUTAMINE GLUTAMINASE 1"/>
    <property type="match status" value="1"/>
</dbReference>
<dbReference type="Pfam" id="PF01339">
    <property type="entry name" value="CheB_methylest"/>
    <property type="match status" value="1"/>
</dbReference>
<dbReference type="Pfam" id="PF00072">
    <property type="entry name" value="Response_reg"/>
    <property type="match status" value="1"/>
</dbReference>
<dbReference type="PIRSF" id="PIRSF000876">
    <property type="entry name" value="RR_chemtxs_CheB"/>
    <property type="match status" value="1"/>
</dbReference>
<dbReference type="SMART" id="SM00448">
    <property type="entry name" value="REC"/>
    <property type="match status" value="1"/>
</dbReference>
<dbReference type="SUPFAM" id="SSF52172">
    <property type="entry name" value="CheY-like"/>
    <property type="match status" value="1"/>
</dbReference>
<dbReference type="SUPFAM" id="SSF52738">
    <property type="entry name" value="Methylesterase CheB, C-terminal domain"/>
    <property type="match status" value="1"/>
</dbReference>
<dbReference type="PROSITE" id="PS50122">
    <property type="entry name" value="CHEB"/>
    <property type="match status" value="1"/>
</dbReference>
<dbReference type="PROSITE" id="PS50110">
    <property type="entry name" value="RESPONSE_REGULATORY"/>
    <property type="match status" value="1"/>
</dbReference>
<gene>
    <name evidence="1" type="primary">cheB</name>
    <name type="ordered locus">PSHAa0813</name>
</gene>
<proteinExistence type="inferred from homology"/>
<organism>
    <name type="scientific">Pseudoalteromonas translucida (strain TAC 125)</name>
    <dbReference type="NCBI Taxonomy" id="326442"/>
    <lineage>
        <taxon>Bacteria</taxon>
        <taxon>Pseudomonadati</taxon>
        <taxon>Pseudomonadota</taxon>
        <taxon>Gammaproteobacteria</taxon>
        <taxon>Alteromonadales</taxon>
        <taxon>Pseudoalteromonadaceae</taxon>
        <taxon>Pseudoalteromonas</taxon>
    </lineage>
</organism>
<accession>Q3IDZ3</accession>